<reference key="1">
    <citation type="journal article" date="1993" name="Gene">
        <title>Complete sequence of the Salmonella typhimurium gene encoding malate dehydrogenase.</title>
        <authorList>
            <person name="Lu C.-D."/>
            <person name="Abdelal A.T."/>
        </authorList>
    </citation>
    <scope>NUCLEOTIDE SEQUENCE [GENOMIC DNA]</scope>
    <source>
        <strain>LT2</strain>
    </source>
</reference>
<reference key="2">
    <citation type="journal article" date="2001" name="Nature">
        <title>Complete genome sequence of Salmonella enterica serovar Typhimurium LT2.</title>
        <authorList>
            <person name="McClelland M."/>
            <person name="Sanderson K.E."/>
            <person name="Spieth J."/>
            <person name="Clifton S.W."/>
            <person name="Latreille P."/>
            <person name="Courtney L."/>
            <person name="Porwollik S."/>
            <person name="Ali J."/>
            <person name="Dante M."/>
            <person name="Du F."/>
            <person name="Hou S."/>
            <person name="Layman D."/>
            <person name="Leonard S."/>
            <person name="Nguyen C."/>
            <person name="Scott K."/>
            <person name="Holmes A."/>
            <person name="Grewal N."/>
            <person name="Mulvaney E."/>
            <person name="Ryan E."/>
            <person name="Sun H."/>
            <person name="Florea L."/>
            <person name="Miller W."/>
            <person name="Stoneking T."/>
            <person name="Nhan M."/>
            <person name="Waterston R."/>
            <person name="Wilson R.K."/>
        </authorList>
    </citation>
    <scope>NUCLEOTIDE SEQUENCE [LARGE SCALE GENOMIC DNA]</scope>
    <source>
        <strain>LT2 / SGSC1412 / ATCC 700720</strain>
    </source>
</reference>
<organism>
    <name type="scientific">Salmonella typhimurium (strain LT2 / SGSC1412 / ATCC 700720)</name>
    <dbReference type="NCBI Taxonomy" id="99287"/>
    <lineage>
        <taxon>Bacteria</taxon>
        <taxon>Pseudomonadati</taxon>
        <taxon>Pseudomonadota</taxon>
        <taxon>Gammaproteobacteria</taxon>
        <taxon>Enterobacterales</taxon>
        <taxon>Enterobacteriaceae</taxon>
        <taxon>Salmonella</taxon>
    </lineage>
</organism>
<accession>P25077</accession>
<feature type="chain" id="PRO_0000113325" description="Malate dehydrogenase">
    <location>
        <begin position="1"/>
        <end position="312"/>
    </location>
</feature>
<feature type="active site" description="Proton acceptor" evidence="1">
    <location>
        <position position="177"/>
    </location>
</feature>
<feature type="binding site" evidence="1">
    <location>
        <begin position="7"/>
        <end position="13"/>
    </location>
    <ligand>
        <name>NAD(+)</name>
        <dbReference type="ChEBI" id="CHEBI:57540"/>
    </ligand>
</feature>
<feature type="binding site" evidence="1">
    <location>
        <position position="34"/>
    </location>
    <ligand>
        <name>NAD(+)</name>
        <dbReference type="ChEBI" id="CHEBI:57540"/>
    </ligand>
</feature>
<feature type="binding site" evidence="1">
    <location>
        <position position="81"/>
    </location>
    <ligand>
        <name>substrate</name>
    </ligand>
</feature>
<feature type="binding site" evidence="1">
    <location>
        <position position="87"/>
    </location>
    <ligand>
        <name>substrate</name>
    </ligand>
</feature>
<feature type="binding site" evidence="1">
    <location>
        <position position="94"/>
    </location>
    <ligand>
        <name>NAD(+)</name>
        <dbReference type="ChEBI" id="CHEBI:57540"/>
    </ligand>
</feature>
<feature type="binding site" evidence="1">
    <location>
        <begin position="117"/>
        <end position="119"/>
    </location>
    <ligand>
        <name>NAD(+)</name>
        <dbReference type="ChEBI" id="CHEBI:57540"/>
    </ligand>
</feature>
<feature type="binding site" evidence="1">
    <location>
        <position position="119"/>
    </location>
    <ligand>
        <name>substrate</name>
    </ligand>
</feature>
<feature type="binding site" evidence="1">
    <location>
        <position position="153"/>
    </location>
    <ligand>
        <name>substrate</name>
    </ligand>
</feature>
<feature type="binding site" evidence="1">
    <location>
        <position position="227"/>
    </location>
    <ligand>
        <name>NAD(+)</name>
        <dbReference type="ChEBI" id="CHEBI:57540"/>
    </ligand>
</feature>
<feature type="sequence conflict" description="In Ref. 1; AAA27158/CAA43363." evidence="2" ref="1">
    <original>G</original>
    <variation>A</variation>
    <location>
        <position position="7"/>
    </location>
</feature>
<feature type="sequence conflict" description="In Ref. 1; AAA27158/CAA43363." evidence="2" ref="1">
    <original>T</original>
    <variation>P</variation>
    <location>
        <position position="156"/>
    </location>
</feature>
<feature type="sequence conflict" description="In Ref. 1; AAA27158/CAA43363." evidence="2" ref="1">
    <original>L</original>
    <variation>V</variation>
    <location>
        <position position="236"/>
    </location>
</feature>
<feature type="sequence conflict" description="In Ref. 1; AAA27158/CAA43363." evidence="2" ref="1">
    <original>DF</original>
    <variation>EI</variation>
    <location>
        <begin position="308"/>
        <end position="309"/>
    </location>
</feature>
<name>MDH_SALTY</name>
<comment type="function">
    <text evidence="1">Catalyzes the reversible oxidation of malate to oxaloacetate.</text>
</comment>
<comment type="catalytic activity">
    <reaction evidence="1">
        <text>(S)-malate + NAD(+) = oxaloacetate + NADH + H(+)</text>
        <dbReference type="Rhea" id="RHEA:21432"/>
        <dbReference type="ChEBI" id="CHEBI:15378"/>
        <dbReference type="ChEBI" id="CHEBI:15589"/>
        <dbReference type="ChEBI" id="CHEBI:16452"/>
        <dbReference type="ChEBI" id="CHEBI:57540"/>
        <dbReference type="ChEBI" id="CHEBI:57945"/>
        <dbReference type="EC" id="1.1.1.37"/>
    </reaction>
</comment>
<comment type="subunit">
    <text>Homodimer.</text>
</comment>
<comment type="similarity">
    <text evidence="1">Belongs to the LDH/MDH superfamily. MDH type 1 family.</text>
</comment>
<gene>
    <name evidence="1" type="primary">mdh</name>
    <name type="ordered locus">STM3359</name>
</gene>
<keyword id="KW-0520">NAD</keyword>
<keyword id="KW-0560">Oxidoreductase</keyword>
<keyword id="KW-1185">Reference proteome</keyword>
<keyword id="KW-0816">Tricarboxylic acid cycle</keyword>
<protein>
    <recommendedName>
        <fullName evidence="1">Malate dehydrogenase</fullName>
        <ecNumber evidence="1">1.1.1.37</ecNumber>
    </recommendedName>
</protein>
<evidence type="ECO:0000255" key="1">
    <source>
        <dbReference type="HAMAP-Rule" id="MF_01516"/>
    </source>
</evidence>
<evidence type="ECO:0000305" key="2"/>
<sequence length="312" mass="32476">MKVAVLGAAGGIGQALALLLKNQLPSGSELSLYDIAPVTPGVAVDLSHIPTAVKIKGFSGEDATPALEGADVVLISAGVARKPGMDRSDLFNVNAGIVKNLVQQIAKTCPKACVGIITNPVNTTVAIAAEVLKKAGVYDKNKLFGVTTLDIIRSNTFVAELKGKLPTEVEVPVIGGHSGVTILPLLSQIPGVSFTEQEAAELTKRIQNAGTEVVEAKAGGGSATLSMGQAAARFGLSLVRALQGEKGVVECAYVEGDGQYARFFSQPLLLGKNGVEERKSIGTLSAFEQHSLDAMLDTLKKDIQLGEDFINK</sequence>
<dbReference type="EC" id="1.1.1.37" evidence="1"/>
<dbReference type="EMBL" id="M95049">
    <property type="protein sequence ID" value="AAA27158.1"/>
    <property type="molecule type" value="Genomic_DNA"/>
</dbReference>
<dbReference type="EMBL" id="X61029">
    <property type="protein sequence ID" value="CAA43363.1"/>
    <property type="molecule type" value="Genomic_DNA"/>
</dbReference>
<dbReference type="EMBL" id="AE006468">
    <property type="protein sequence ID" value="AAL22228.1"/>
    <property type="molecule type" value="Genomic_DNA"/>
</dbReference>
<dbReference type="PIR" id="S16143">
    <property type="entry name" value="DEEBM"/>
</dbReference>
<dbReference type="RefSeq" id="NP_462269.1">
    <property type="nucleotide sequence ID" value="NC_003197.2"/>
</dbReference>
<dbReference type="RefSeq" id="WP_000861586.1">
    <property type="nucleotide sequence ID" value="NC_003197.2"/>
</dbReference>
<dbReference type="SMR" id="P25077"/>
<dbReference type="STRING" id="99287.STM3359"/>
<dbReference type="PaxDb" id="99287-STM3359"/>
<dbReference type="GeneID" id="1254882"/>
<dbReference type="KEGG" id="stm:STM3359"/>
<dbReference type="PATRIC" id="fig|99287.12.peg.3560"/>
<dbReference type="HOGENOM" id="CLU_047181_1_0_6"/>
<dbReference type="OMA" id="ASCAEYI"/>
<dbReference type="PhylomeDB" id="P25077"/>
<dbReference type="BioCyc" id="SENT99287:STM3359-MONOMER"/>
<dbReference type="Proteomes" id="UP000001014">
    <property type="component" value="Chromosome"/>
</dbReference>
<dbReference type="GO" id="GO:0005737">
    <property type="term" value="C:cytoplasm"/>
    <property type="evidence" value="ECO:0000318"/>
    <property type="project" value="GO_Central"/>
</dbReference>
<dbReference type="GO" id="GO:0030060">
    <property type="term" value="F:L-malate dehydrogenase (NAD+) activity"/>
    <property type="evidence" value="ECO:0000318"/>
    <property type="project" value="GO_Central"/>
</dbReference>
<dbReference type="GO" id="GO:0006108">
    <property type="term" value="P:malate metabolic process"/>
    <property type="evidence" value="ECO:0007669"/>
    <property type="project" value="InterPro"/>
</dbReference>
<dbReference type="GO" id="GO:0006099">
    <property type="term" value="P:tricarboxylic acid cycle"/>
    <property type="evidence" value="ECO:0007669"/>
    <property type="project" value="UniProtKB-UniRule"/>
</dbReference>
<dbReference type="CDD" id="cd01337">
    <property type="entry name" value="MDH_glyoxysomal_mitochondrial"/>
    <property type="match status" value="1"/>
</dbReference>
<dbReference type="FunFam" id="3.40.50.720:FF:000017">
    <property type="entry name" value="Malate dehydrogenase"/>
    <property type="match status" value="1"/>
</dbReference>
<dbReference type="FunFam" id="3.90.110.10:FF:000001">
    <property type="entry name" value="Malate dehydrogenase"/>
    <property type="match status" value="1"/>
</dbReference>
<dbReference type="Gene3D" id="3.90.110.10">
    <property type="entry name" value="Lactate dehydrogenase/glycoside hydrolase, family 4, C-terminal"/>
    <property type="match status" value="1"/>
</dbReference>
<dbReference type="Gene3D" id="3.40.50.720">
    <property type="entry name" value="NAD(P)-binding Rossmann-like Domain"/>
    <property type="match status" value="1"/>
</dbReference>
<dbReference type="HAMAP" id="MF_01516">
    <property type="entry name" value="Malate_dehydrog_1"/>
    <property type="match status" value="1"/>
</dbReference>
<dbReference type="InterPro" id="IPR001557">
    <property type="entry name" value="L-lactate/malate_DH"/>
</dbReference>
<dbReference type="InterPro" id="IPR022383">
    <property type="entry name" value="Lactate/malate_DH_C"/>
</dbReference>
<dbReference type="InterPro" id="IPR001236">
    <property type="entry name" value="Lactate/malate_DH_N"/>
</dbReference>
<dbReference type="InterPro" id="IPR015955">
    <property type="entry name" value="Lactate_DH/Glyco_Ohase_4_C"/>
</dbReference>
<dbReference type="InterPro" id="IPR001252">
    <property type="entry name" value="Malate_DH_AS"/>
</dbReference>
<dbReference type="InterPro" id="IPR010097">
    <property type="entry name" value="Malate_DH_type1"/>
</dbReference>
<dbReference type="InterPro" id="IPR023958">
    <property type="entry name" value="Malate_DH_type1_bac"/>
</dbReference>
<dbReference type="InterPro" id="IPR036291">
    <property type="entry name" value="NAD(P)-bd_dom_sf"/>
</dbReference>
<dbReference type="NCBIfam" id="TIGR01772">
    <property type="entry name" value="MDH_euk_gproteo"/>
    <property type="match status" value="1"/>
</dbReference>
<dbReference type="PANTHER" id="PTHR11540">
    <property type="entry name" value="MALATE AND LACTATE DEHYDROGENASE"/>
    <property type="match status" value="1"/>
</dbReference>
<dbReference type="PANTHER" id="PTHR11540:SF16">
    <property type="entry name" value="MALATE DEHYDROGENASE, MITOCHONDRIAL"/>
    <property type="match status" value="1"/>
</dbReference>
<dbReference type="Pfam" id="PF02866">
    <property type="entry name" value="Ldh_1_C"/>
    <property type="match status" value="1"/>
</dbReference>
<dbReference type="Pfam" id="PF00056">
    <property type="entry name" value="Ldh_1_N"/>
    <property type="match status" value="1"/>
</dbReference>
<dbReference type="PIRSF" id="PIRSF000102">
    <property type="entry name" value="Lac_mal_DH"/>
    <property type="match status" value="1"/>
</dbReference>
<dbReference type="SUPFAM" id="SSF56327">
    <property type="entry name" value="LDH C-terminal domain-like"/>
    <property type="match status" value="1"/>
</dbReference>
<dbReference type="SUPFAM" id="SSF51735">
    <property type="entry name" value="NAD(P)-binding Rossmann-fold domains"/>
    <property type="match status" value="1"/>
</dbReference>
<dbReference type="PROSITE" id="PS00068">
    <property type="entry name" value="MDH"/>
    <property type="match status" value="1"/>
</dbReference>
<proteinExistence type="inferred from homology"/>